<sequence length="126" mass="14404">MSLLRCRFQALPSLCFCVLVLACIVACQLQMPPGTQSPPPEPKSHWSQVQSKVKELVEPLVTKTRERWQWLWGPGPFQGFLQTYYHDHLKDLGPRTKAWLRSSKDGLLNKAQSLCPRLLCGDKDQD</sequence>
<comment type="function">
    <text evidence="1">May participate in lipoprotein metabolism.</text>
</comment>
<comment type="subcellular location">
    <subcellularLocation>
        <location evidence="1">Secreted</location>
    </subcellularLocation>
</comment>
<comment type="similarity">
    <text evidence="3">Belongs to the apolipoprotein C4 family.</text>
</comment>
<dbReference type="EMBL" id="AAQR03153639">
    <property type="status" value="NOT_ANNOTATED_CDS"/>
    <property type="molecule type" value="Genomic_DNA"/>
</dbReference>
<dbReference type="RefSeq" id="XP_003799640.1">
    <property type="nucleotide sequence ID" value="XM_003799592.3"/>
</dbReference>
<dbReference type="FunCoup" id="P0DMN8">
    <property type="interactions" value="15"/>
</dbReference>
<dbReference type="STRING" id="30611.ENSOGAP00000011448"/>
<dbReference type="Ensembl" id="ENSOGAT00000012774.2">
    <property type="protein sequence ID" value="ENSOGAP00000011448.2"/>
    <property type="gene ID" value="ENSOGAG00000012770.2"/>
</dbReference>
<dbReference type="GeneID" id="100962100"/>
<dbReference type="KEGG" id="oga:100962100"/>
<dbReference type="CTD" id="346"/>
<dbReference type="eggNOG" id="ENOG502TE52">
    <property type="taxonomic scope" value="Eukaryota"/>
</dbReference>
<dbReference type="GeneTree" id="ENSGT00390000015914"/>
<dbReference type="HOGENOM" id="CLU_161459_0_0_1"/>
<dbReference type="InParanoid" id="P0DMN8"/>
<dbReference type="OMA" id="KWQWFWG"/>
<dbReference type="OrthoDB" id="9449255at2759"/>
<dbReference type="Proteomes" id="UP000005225">
    <property type="component" value="Unassembled WGS sequence"/>
</dbReference>
<dbReference type="GO" id="GO:0034364">
    <property type="term" value="C:high-density lipoprotein particle"/>
    <property type="evidence" value="ECO:0007669"/>
    <property type="project" value="Ensembl"/>
</dbReference>
<dbReference type="GO" id="GO:0034361">
    <property type="term" value="C:very-low-density lipoprotein particle"/>
    <property type="evidence" value="ECO:0007669"/>
    <property type="project" value="Ensembl"/>
</dbReference>
<dbReference type="GO" id="GO:0019915">
    <property type="term" value="P:lipid storage"/>
    <property type="evidence" value="ECO:0007669"/>
    <property type="project" value="Ensembl"/>
</dbReference>
<dbReference type="GO" id="GO:0006869">
    <property type="term" value="P:lipid transport"/>
    <property type="evidence" value="ECO:0007669"/>
    <property type="project" value="UniProtKB-KW"/>
</dbReference>
<dbReference type="GO" id="GO:0010890">
    <property type="term" value="P:positive regulation of triglyceride storage"/>
    <property type="evidence" value="ECO:0007669"/>
    <property type="project" value="TreeGrafter"/>
</dbReference>
<dbReference type="GO" id="GO:0070328">
    <property type="term" value="P:triglyceride homeostasis"/>
    <property type="evidence" value="ECO:0007669"/>
    <property type="project" value="Ensembl"/>
</dbReference>
<dbReference type="InterPro" id="IPR028120">
    <property type="entry name" value="APOC4"/>
</dbReference>
<dbReference type="PANTHER" id="PTHR32288">
    <property type="entry name" value="APOLIPOPROTEIN C-IV"/>
    <property type="match status" value="1"/>
</dbReference>
<dbReference type="PANTHER" id="PTHR32288:SF0">
    <property type="entry name" value="APOLIPOPROTEIN C-IV"/>
    <property type="match status" value="1"/>
</dbReference>
<dbReference type="Pfam" id="PF15119">
    <property type="entry name" value="APOC4"/>
    <property type="match status" value="1"/>
</dbReference>
<keyword id="KW-0445">Lipid transport</keyword>
<keyword id="KW-1185">Reference proteome</keyword>
<keyword id="KW-0964">Secreted</keyword>
<keyword id="KW-0732">Signal</keyword>
<keyword id="KW-0813">Transport</keyword>
<feature type="signal peptide" evidence="2">
    <location>
        <begin position="1"/>
        <end position="27"/>
    </location>
</feature>
<feature type="chain" id="PRO_0000430327" description="Apolipoprotein C-IV">
    <location>
        <begin position="28"/>
        <end position="126"/>
    </location>
</feature>
<name>APOC4_OTOGA</name>
<proteinExistence type="inferred from homology"/>
<accession>P0DMN8</accession>
<protein>
    <recommendedName>
        <fullName>Apolipoprotein C-IV</fullName>
        <shortName>Apo-CIV</shortName>
        <shortName>ApoC-IV</shortName>
    </recommendedName>
    <alternativeName>
        <fullName>Apolipoprotein C4</fullName>
    </alternativeName>
</protein>
<organism>
    <name type="scientific">Otolemur garnettii</name>
    <name type="common">Small-eared galago</name>
    <name type="synonym">Garnett's greater bushbaby</name>
    <dbReference type="NCBI Taxonomy" id="30611"/>
    <lineage>
        <taxon>Eukaryota</taxon>
        <taxon>Metazoa</taxon>
        <taxon>Chordata</taxon>
        <taxon>Craniata</taxon>
        <taxon>Vertebrata</taxon>
        <taxon>Euteleostomi</taxon>
        <taxon>Mammalia</taxon>
        <taxon>Eutheria</taxon>
        <taxon>Euarchontoglires</taxon>
        <taxon>Primates</taxon>
        <taxon>Strepsirrhini</taxon>
        <taxon>Lorisiformes</taxon>
        <taxon>Galagidae</taxon>
        <taxon>Otolemur</taxon>
    </lineage>
</organism>
<evidence type="ECO:0000250" key="1"/>
<evidence type="ECO:0000250" key="2">
    <source>
        <dbReference type="UniProtKB" id="P55057"/>
    </source>
</evidence>
<evidence type="ECO:0000305" key="3"/>
<gene>
    <name type="primary">APOC4</name>
</gene>
<reference key="1">
    <citation type="submission" date="2006-05" db="EMBL/GenBank/DDBJ databases">
        <authorList>
            <person name="Lindblad-Toh K."/>
            <person name="Chang J.L."/>
            <person name="Gnerre S."/>
            <person name="Clamp M."/>
            <person name="Lander E.S."/>
        </authorList>
    </citation>
    <scope>NUCLEOTIDE SEQUENCE [LARGE SCALE GENOMIC DNA]</scope>
</reference>
<reference key="2">
    <citation type="unpublished observations" date="2014-07">
        <authorList>
            <person name="Puppione D.L."/>
        </authorList>
    </citation>
    <scope>IDENTIFICATION</scope>
</reference>